<proteinExistence type="inferred from homology"/>
<feature type="chain" id="PRO_0000135484" description="Queuine tRNA-ribosyltransferase">
    <location>
        <begin position="1"/>
        <end position="371"/>
    </location>
</feature>
<feature type="region of interest" description="RNA binding" evidence="1">
    <location>
        <begin position="246"/>
        <end position="252"/>
    </location>
</feature>
<feature type="region of interest" description="RNA binding; important for wobble base 34 recognition" evidence="1">
    <location>
        <begin position="270"/>
        <end position="274"/>
    </location>
</feature>
<feature type="active site" description="Proton acceptor" evidence="1">
    <location>
        <position position="90"/>
    </location>
</feature>
<feature type="active site" description="Nucleophile" evidence="1">
    <location>
        <position position="265"/>
    </location>
</feature>
<feature type="binding site" evidence="1">
    <location>
        <begin position="90"/>
        <end position="94"/>
    </location>
    <ligand>
        <name>substrate</name>
    </ligand>
</feature>
<feature type="binding site" evidence="1">
    <location>
        <position position="144"/>
    </location>
    <ligand>
        <name>substrate</name>
    </ligand>
</feature>
<feature type="binding site" evidence="1">
    <location>
        <position position="189"/>
    </location>
    <ligand>
        <name>substrate</name>
    </ligand>
</feature>
<feature type="binding site" evidence="1">
    <location>
        <position position="215"/>
    </location>
    <ligand>
        <name>substrate</name>
    </ligand>
</feature>
<feature type="binding site" evidence="1">
    <location>
        <position position="303"/>
    </location>
    <ligand>
        <name>Zn(2+)</name>
        <dbReference type="ChEBI" id="CHEBI:29105"/>
    </ligand>
</feature>
<feature type="binding site" evidence="1">
    <location>
        <position position="305"/>
    </location>
    <ligand>
        <name>Zn(2+)</name>
        <dbReference type="ChEBI" id="CHEBI:29105"/>
    </ligand>
</feature>
<feature type="binding site" evidence="1">
    <location>
        <position position="308"/>
    </location>
    <ligand>
        <name>Zn(2+)</name>
        <dbReference type="ChEBI" id="CHEBI:29105"/>
    </ligand>
</feature>
<feature type="binding site" evidence="1">
    <location>
        <position position="334"/>
    </location>
    <ligand>
        <name>Zn(2+)</name>
        <dbReference type="ChEBI" id="CHEBI:29105"/>
    </ligand>
</feature>
<reference key="1">
    <citation type="journal article" date="1999" name="Nature">
        <title>Genomic sequence comparison of two unrelated isolates of the human gastric pathogen Helicobacter pylori.</title>
        <authorList>
            <person name="Alm R.A."/>
            <person name="Ling L.-S.L."/>
            <person name="Moir D.T."/>
            <person name="King B.L."/>
            <person name="Brown E.D."/>
            <person name="Doig P.C."/>
            <person name="Smith D.R."/>
            <person name="Noonan B."/>
            <person name="Guild B.C."/>
            <person name="deJonge B.L."/>
            <person name="Carmel G."/>
            <person name="Tummino P.J."/>
            <person name="Caruso A."/>
            <person name="Uria-Nickelsen M."/>
            <person name="Mills D.M."/>
            <person name="Ives C."/>
            <person name="Gibson R."/>
            <person name="Merberg D."/>
            <person name="Mills S.D."/>
            <person name="Jiang Q."/>
            <person name="Taylor D.E."/>
            <person name="Vovis G.F."/>
            <person name="Trust T.J."/>
        </authorList>
    </citation>
    <scope>NUCLEOTIDE SEQUENCE [LARGE SCALE GENOMIC DNA]</scope>
    <source>
        <strain>J99 / ATCC 700824</strain>
    </source>
</reference>
<accession>Q9ZMF4</accession>
<comment type="function">
    <text evidence="1">Catalyzes the base-exchange of a guanine (G) residue with the queuine precursor 7-aminomethyl-7-deazaguanine (PreQ1) at position 34 (anticodon wobble position) in tRNAs with GU(N) anticodons (tRNA-Asp, -Asn, -His and -Tyr). Catalysis occurs through a double-displacement mechanism. The nucleophile active site attacks the C1' of nucleotide 34 to detach the guanine base from the RNA, forming a covalent enzyme-RNA intermediate. The proton acceptor active site deprotonates the incoming PreQ1, allowing a nucleophilic attack on the C1' of the ribose to form the product. After dissociation, two additional enzymatic reactions on the tRNA convert PreQ1 to queuine (Q), resulting in the hypermodified nucleoside queuosine (7-(((4,5-cis-dihydroxy-2-cyclopenten-1-yl)amino)methyl)-7-deazaguanosine).</text>
</comment>
<comment type="catalytic activity">
    <reaction evidence="1">
        <text>7-aminomethyl-7-carbaguanine + guanosine(34) in tRNA = 7-aminomethyl-7-carbaguanosine(34) in tRNA + guanine</text>
        <dbReference type="Rhea" id="RHEA:24104"/>
        <dbReference type="Rhea" id="RHEA-COMP:10341"/>
        <dbReference type="Rhea" id="RHEA-COMP:10342"/>
        <dbReference type="ChEBI" id="CHEBI:16235"/>
        <dbReference type="ChEBI" id="CHEBI:58703"/>
        <dbReference type="ChEBI" id="CHEBI:74269"/>
        <dbReference type="ChEBI" id="CHEBI:82833"/>
        <dbReference type="EC" id="2.4.2.29"/>
    </reaction>
</comment>
<comment type="cofactor">
    <cofactor evidence="1">
        <name>Zn(2+)</name>
        <dbReference type="ChEBI" id="CHEBI:29105"/>
    </cofactor>
    <text evidence="1">Binds 1 zinc ion per subunit.</text>
</comment>
<comment type="pathway">
    <text evidence="1">tRNA modification; tRNA-queuosine biosynthesis.</text>
</comment>
<comment type="subunit">
    <text evidence="1">Homodimer. Within each dimer, one monomer is responsible for RNA recognition and catalysis, while the other monomer binds to the replacement base PreQ1.</text>
</comment>
<comment type="similarity">
    <text evidence="1">Belongs to the queuine tRNA-ribosyltransferase family.</text>
</comment>
<name>TGT_HELPJ</name>
<evidence type="ECO:0000255" key="1">
    <source>
        <dbReference type="HAMAP-Rule" id="MF_00168"/>
    </source>
</evidence>
<keyword id="KW-0328">Glycosyltransferase</keyword>
<keyword id="KW-0479">Metal-binding</keyword>
<keyword id="KW-0671">Queuosine biosynthesis</keyword>
<keyword id="KW-0808">Transferase</keyword>
<keyword id="KW-0819">tRNA processing</keyword>
<keyword id="KW-0862">Zinc</keyword>
<sequence>MDFQLQAVDDNARAGVLNLAHSQVETPVFMPVGTQGCIKSLDAMDAQEILGAKLILANTYHMYLRPGEKVVEQLGGLHRFAQFQGSFLTDSGGFQAFSLSDNVKLQEDGIVFKSHIDGSKHLFTPIKVLDIQYSLNSDIMMVLDDLVGLPAPLKRLEESIKRSAKWANMSLEYHKENNRPNNNLFAIIQGGTHLKMRSLSVGLTHEGFDGYAIGGLAVGESVDEMLETIAHTAPLLPKDKPRYLMGVGTPENILDAISLGVDMFDCVMPTRNARNATLFTHSGKISIKNAPYKLDDTPIEENCACYACKRYSKAYLHHLFRAKELTYARLASLHNLHFYLELVKNARNAILEKRFLSFKKEFLEKYHSCSH</sequence>
<dbReference type="EC" id="2.4.2.29" evidence="1"/>
<dbReference type="EMBL" id="AE001439">
    <property type="protein sequence ID" value="AAD05847.1"/>
    <property type="molecule type" value="Genomic_DNA"/>
</dbReference>
<dbReference type="PIR" id="C71952">
    <property type="entry name" value="C71952"/>
</dbReference>
<dbReference type="RefSeq" id="WP_000347431.1">
    <property type="nucleotide sequence ID" value="NC_000921.1"/>
</dbReference>
<dbReference type="SMR" id="Q9ZMF4"/>
<dbReference type="KEGG" id="hpj:jhp_0266"/>
<dbReference type="PATRIC" id="fig|85963.30.peg.748"/>
<dbReference type="eggNOG" id="COG0343">
    <property type="taxonomic scope" value="Bacteria"/>
</dbReference>
<dbReference type="UniPathway" id="UPA00392"/>
<dbReference type="Proteomes" id="UP000000804">
    <property type="component" value="Chromosome"/>
</dbReference>
<dbReference type="GO" id="GO:0005829">
    <property type="term" value="C:cytosol"/>
    <property type="evidence" value="ECO:0007669"/>
    <property type="project" value="TreeGrafter"/>
</dbReference>
<dbReference type="GO" id="GO:0046872">
    <property type="term" value="F:metal ion binding"/>
    <property type="evidence" value="ECO:0007669"/>
    <property type="project" value="UniProtKB-KW"/>
</dbReference>
<dbReference type="GO" id="GO:0008479">
    <property type="term" value="F:tRNA-guanosine(34) queuine transglycosylase activity"/>
    <property type="evidence" value="ECO:0007669"/>
    <property type="project" value="UniProtKB-UniRule"/>
</dbReference>
<dbReference type="GO" id="GO:0008616">
    <property type="term" value="P:queuosine biosynthetic process"/>
    <property type="evidence" value="ECO:0007669"/>
    <property type="project" value="UniProtKB-UniRule"/>
</dbReference>
<dbReference type="GO" id="GO:0101030">
    <property type="term" value="P:tRNA-guanine transglycosylation"/>
    <property type="evidence" value="ECO:0007669"/>
    <property type="project" value="InterPro"/>
</dbReference>
<dbReference type="Gene3D" id="3.20.20.105">
    <property type="entry name" value="Queuine tRNA-ribosyltransferase-like"/>
    <property type="match status" value="1"/>
</dbReference>
<dbReference type="HAMAP" id="MF_00168">
    <property type="entry name" value="Q_tRNA_Tgt"/>
    <property type="match status" value="1"/>
</dbReference>
<dbReference type="InterPro" id="IPR004803">
    <property type="entry name" value="TGT"/>
</dbReference>
<dbReference type="InterPro" id="IPR036511">
    <property type="entry name" value="TGT-like_sf"/>
</dbReference>
<dbReference type="InterPro" id="IPR002616">
    <property type="entry name" value="tRNA_ribo_trans-like"/>
</dbReference>
<dbReference type="NCBIfam" id="TIGR00430">
    <property type="entry name" value="Q_tRNA_tgt"/>
    <property type="match status" value="1"/>
</dbReference>
<dbReference type="NCBIfam" id="TIGR00449">
    <property type="entry name" value="tgt_general"/>
    <property type="match status" value="1"/>
</dbReference>
<dbReference type="PANTHER" id="PTHR43530">
    <property type="entry name" value="QUEUINE TRNA-RIBOSYLTRANSFERASE CATALYTIC SUBUNIT 1"/>
    <property type="match status" value="1"/>
</dbReference>
<dbReference type="PANTHER" id="PTHR43530:SF1">
    <property type="entry name" value="QUEUINE TRNA-RIBOSYLTRANSFERASE CATALYTIC SUBUNIT 1"/>
    <property type="match status" value="1"/>
</dbReference>
<dbReference type="Pfam" id="PF01702">
    <property type="entry name" value="TGT"/>
    <property type="match status" value="1"/>
</dbReference>
<dbReference type="SUPFAM" id="SSF51713">
    <property type="entry name" value="tRNA-guanine transglycosylase"/>
    <property type="match status" value="1"/>
</dbReference>
<protein>
    <recommendedName>
        <fullName evidence="1">Queuine tRNA-ribosyltransferase</fullName>
        <ecNumber evidence="1">2.4.2.29</ecNumber>
    </recommendedName>
    <alternativeName>
        <fullName evidence="1">Guanine insertion enzyme</fullName>
    </alternativeName>
    <alternativeName>
        <fullName evidence="1">tRNA-guanine transglycosylase</fullName>
    </alternativeName>
</protein>
<organism>
    <name type="scientific">Helicobacter pylori (strain J99 / ATCC 700824)</name>
    <name type="common">Campylobacter pylori J99</name>
    <dbReference type="NCBI Taxonomy" id="85963"/>
    <lineage>
        <taxon>Bacteria</taxon>
        <taxon>Pseudomonadati</taxon>
        <taxon>Campylobacterota</taxon>
        <taxon>Epsilonproteobacteria</taxon>
        <taxon>Campylobacterales</taxon>
        <taxon>Helicobacteraceae</taxon>
        <taxon>Helicobacter</taxon>
    </lineage>
</organism>
<gene>
    <name evidence="1" type="primary">tgt</name>
    <name type="ordered locus">jhp_0266</name>
</gene>